<organism>
    <name type="scientific">Saccharolobus islandicus (strain M.16.4 / Kamchatka #3)</name>
    <name type="common">Sulfolobus islandicus</name>
    <dbReference type="NCBI Taxonomy" id="426118"/>
    <lineage>
        <taxon>Archaea</taxon>
        <taxon>Thermoproteota</taxon>
        <taxon>Thermoprotei</taxon>
        <taxon>Sulfolobales</taxon>
        <taxon>Sulfolobaceae</taxon>
        <taxon>Saccharolobus</taxon>
    </lineage>
</organism>
<evidence type="ECO:0000255" key="1">
    <source>
        <dbReference type="HAMAP-Rule" id="MF_00029"/>
    </source>
</evidence>
<evidence type="ECO:0000256" key="2">
    <source>
        <dbReference type="SAM" id="MobiDB-lite"/>
    </source>
</evidence>
<evidence type="ECO:0000305" key="3"/>
<name>RS8E_SACI6</name>
<accession>C4KJ22</accession>
<reference key="1">
    <citation type="journal article" date="2009" name="Proc. Natl. Acad. Sci. U.S.A.">
        <title>Biogeography of the Sulfolobus islandicus pan-genome.</title>
        <authorList>
            <person name="Reno M.L."/>
            <person name="Held N.L."/>
            <person name="Fields C.J."/>
            <person name="Burke P.V."/>
            <person name="Whitaker R.J."/>
        </authorList>
    </citation>
    <scope>NUCLEOTIDE SEQUENCE [LARGE SCALE GENOMIC DNA]</scope>
    <source>
        <strain>M.16.4 / Kamchatka #3</strain>
    </source>
</reference>
<comment type="subunit">
    <text evidence="1">Part of the 30S ribosomal subunit.</text>
</comment>
<comment type="similarity">
    <text evidence="1">Belongs to the eukaryotic ribosomal protein eS8 family.</text>
</comment>
<feature type="chain" id="PRO_1000201975" description="Small ribosomal subunit protein eS8">
    <location>
        <begin position="1"/>
        <end position="133"/>
    </location>
</feature>
<feature type="region of interest" description="Disordered" evidence="2">
    <location>
        <begin position="1"/>
        <end position="22"/>
    </location>
</feature>
<gene>
    <name evidence="1" type="primary">rps8e</name>
    <name type="ordered locus">M164_1982</name>
</gene>
<sequence length="133" mass="14502">MGFYQGPDNRKITGGLKGKHRDKRKYEIGNPSTLTTLSAEDIRIKDRTLGGNFKVRLKYTTTANVLDPATNTAKKVKILEVLETPANKELARRGIIIRGAKIRTEAGLAVVTSRPGQDGVINAVLLKNESQGS</sequence>
<proteinExistence type="inferred from homology"/>
<keyword id="KW-0687">Ribonucleoprotein</keyword>
<keyword id="KW-0689">Ribosomal protein</keyword>
<protein>
    <recommendedName>
        <fullName evidence="1">Small ribosomal subunit protein eS8</fullName>
    </recommendedName>
    <alternativeName>
        <fullName evidence="3">30S ribosomal protein S8e</fullName>
    </alternativeName>
</protein>
<dbReference type="EMBL" id="CP001402">
    <property type="protein sequence ID" value="ACR42586.1"/>
    <property type="molecule type" value="Genomic_DNA"/>
</dbReference>
<dbReference type="RefSeq" id="WP_012714112.1">
    <property type="nucleotide sequence ID" value="NC_012726.1"/>
</dbReference>
<dbReference type="BMRB" id="C4KJ22"/>
<dbReference type="SMR" id="C4KJ22"/>
<dbReference type="KEGG" id="sid:M164_1982"/>
<dbReference type="HOGENOM" id="CLU_080597_2_1_2"/>
<dbReference type="Proteomes" id="UP000001479">
    <property type="component" value="Chromosome"/>
</dbReference>
<dbReference type="GO" id="GO:1990904">
    <property type="term" value="C:ribonucleoprotein complex"/>
    <property type="evidence" value="ECO:0007669"/>
    <property type="project" value="UniProtKB-KW"/>
</dbReference>
<dbReference type="GO" id="GO:0005840">
    <property type="term" value="C:ribosome"/>
    <property type="evidence" value="ECO:0007669"/>
    <property type="project" value="UniProtKB-KW"/>
</dbReference>
<dbReference type="GO" id="GO:0003735">
    <property type="term" value="F:structural constituent of ribosome"/>
    <property type="evidence" value="ECO:0007669"/>
    <property type="project" value="InterPro"/>
</dbReference>
<dbReference type="GO" id="GO:0006412">
    <property type="term" value="P:translation"/>
    <property type="evidence" value="ECO:0007669"/>
    <property type="project" value="UniProtKB-UniRule"/>
</dbReference>
<dbReference type="CDD" id="cd11382">
    <property type="entry name" value="Ribosomal_S8e"/>
    <property type="match status" value="1"/>
</dbReference>
<dbReference type="FunFam" id="2.40.10.310:FF:000002">
    <property type="entry name" value="30S ribosomal protein S8e"/>
    <property type="match status" value="1"/>
</dbReference>
<dbReference type="Gene3D" id="2.40.10.310">
    <property type="match status" value="1"/>
</dbReference>
<dbReference type="HAMAP" id="MF_00029">
    <property type="entry name" value="Ribosomal_eS8"/>
    <property type="match status" value="1"/>
</dbReference>
<dbReference type="InterPro" id="IPR001047">
    <property type="entry name" value="Ribosomal_eS8"/>
</dbReference>
<dbReference type="InterPro" id="IPR018283">
    <property type="entry name" value="Ribosomal_eS8_CS"/>
</dbReference>
<dbReference type="InterPro" id="IPR020919">
    <property type="entry name" value="Ribosomal_protein_eS8_arc"/>
</dbReference>
<dbReference type="InterPro" id="IPR022309">
    <property type="entry name" value="Ribosomal_Se8/biogenesis_NSA2"/>
</dbReference>
<dbReference type="NCBIfam" id="TIGR00307">
    <property type="entry name" value="eS8"/>
    <property type="match status" value="1"/>
</dbReference>
<dbReference type="PANTHER" id="PTHR10394">
    <property type="entry name" value="40S RIBOSOMAL PROTEIN S8"/>
    <property type="match status" value="1"/>
</dbReference>
<dbReference type="Pfam" id="PF01201">
    <property type="entry name" value="Ribosomal_S8e"/>
    <property type="match status" value="1"/>
</dbReference>
<dbReference type="PROSITE" id="PS01193">
    <property type="entry name" value="RIBOSOMAL_S8E"/>
    <property type="match status" value="1"/>
</dbReference>